<feature type="signal peptide" evidence="1">
    <location>
        <begin position="1"/>
        <end position="22"/>
    </location>
</feature>
<feature type="chain" id="PRO_1000078362" description="Outer-membrane lipoprotein carrier protein">
    <location>
        <begin position="23"/>
        <end position="208"/>
    </location>
</feature>
<comment type="function">
    <text evidence="1">Participates in the translocation of lipoproteins from the inner membrane to the outer membrane. Only forms a complex with a lipoprotein if the residue after the N-terminal Cys is not an aspartate (The Asp acts as a targeting signal to indicate that the lipoprotein should stay in the inner membrane).</text>
</comment>
<comment type="subunit">
    <text evidence="1">Monomer.</text>
</comment>
<comment type="subcellular location">
    <subcellularLocation>
        <location evidence="1">Periplasm</location>
    </subcellularLocation>
</comment>
<comment type="similarity">
    <text evidence="1">Belongs to the LolA family.</text>
</comment>
<sequence length="208" mass="23241">MKKIFTIAALSLPLFCHLPAMAGGQDDLKVKLMEINTLKANFNQTVTDINQKVIQTGEGVFALSHPNQFYWHLTAPDESLIVADGTDVWIYNPFAEEVSVMDINQAINASPIALLVHSDDATWSQYDVVNNGDCFDISPRDKDSGVSEVEVCFNQQQLTKMVLKDQQGNTSDFTLTNQTPIAENDKDLFKFIVPDDVDIDDQRLKSQN</sequence>
<dbReference type="EMBL" id="CP000851">
    <property type="protein sequence ID" value="ABV87552.1"/>
    <property type="molecule type" value="Genomic_DNA"/>
</dbReference>
<dbReference type="RefSeq" id="WP_012155468.1">
    <property type="nucleotide sequence ID" value="NC_009901.1"/>
</dbReference>
<dbReference type="SMR" id="A8H4R5"/>
<dbReference type="STRING" id="398579.Spea_2232"/>
<dbReference type="KEGG" id="spl:Spea_2232"/>
<dbReference type="eggNOG" id="COG2834">
    <property type="taxonomic scope" value="Bacteria"/>
</dbReference>
<dbReference type="HOGENOM" id="CLU_087560_1_1_6"/>
<dbReference type="OrthoDB" id="9787361at2"/>
<dbReference type="Proteomes" id="UP000002608">
    <property type="component" value="Chromosome"/>
</dbReference>
<dbReference type="GO" id="GO:0030288">
    <property type="term" value="C:outer membrane-bounded periplasmic space"/>
    <property type="evidence" value="ECO:0007669"/>
    <property type="project" value="TreeGrafter"/>
</dbReference>
<dbReference type="GO" id="GO:0044874">
    <property type="term" value="P:lipoprotein localization to outer membrane"/>
    <property type="evidence" value="ECO:0007669"/>
    <property type="project" value="UniProtKB-UniRule"/>
</dbReference>
<dbReference type="GO" id="GO:0042953">
    <property type="term" value="P:lipoprotein transport"/>
    <property type="evidence" value="ECO:0007669"/>
    <property type="project" value="InterPro"/>
</dbReference>
<dbReference type="CDD" id="cd16325">
    <property type="entry name" value="LolA"/>
    <property type="match status" value="1"/>
</dbReference>
<dbReference type="Gene3D" id="2.50.20.10">
    <property type="entry name" value="Lipoprotein localisation LolA/LolB/LppX"/>
    <property type="match status" value="1"/>
</dbReference>
<dbReference type="HAMAP" id="MF_00240">
    <property type="entry name" value="LolA"/>
    <property type="match status" value="1"/>
</dbReference>
<dbReference type="InterPro" id="IPR029046">
    <property type="entry name" value="LolA/LolB/LppX"/>
</dbReference>
<dbReference type="InterPro" id="IPR004564">
    <property type="entry name" value="OM_lipoprot_carrier_LolA-like"/>
</dbReference>
<dbReference type="InterPro" id="IPR018323">
    <property type="entry name" value="OM_lipoprot_carrier_LolA_Pbac"/>
</dbReference>
<dbReference type="NCBIfam" id="TIGR00547">
    <property type="entry name" value="lolA"/>
    <property type="match status" value="1"/>
</dbReference>
<dbReference type="PANTHER" id="PTHR35869">
    <property type="entry name" value="OUTER-MEMBRANE LIPOPROTEIN CARRIER PROTEIN"/>
    <property type="match status" value="1"/>
</dbReference>
<dbReference type="PANTHER" id="PTHR35869:SF1">
    <property type="entry name" value="OUTER-MEMBRANE LIPOPROTEIN CARRIER PROTEIN"/>
    <property type="match status" value="1"/>
</dbReference>
<dbReference type="Pfam" id="PF03548">
    <property type="entry name" value="LolA"/>
    <property type="match status" value="1"/>
</dbReference>
<dbReference type="SUPFAM" id="SSF89392">
    <property type="entry name" value="Prokaryotic lipoproteins and lipoprotein localization factors"/>
    <property type="match status" value="1"/>
</dbReference>
<proteinExistence type="inferred from homology"/>
<name>LOLA_SHEPA</name>
<keyword id="KW-0143">Chaperone</keyword>
<keyword id="KW-0574">Periplasm</keyword>
<keyword id="KW-0653">Protein transport</keyword>
<keyword id="KW-1185">Reference proteome</keyword>
<keyword id="KW-0732">Signal</keyword>
<keyword id="KW-0813">Transport</keyword>
<reference key="1">
    <citation type="submission" date="2007-10" db="EMBL/GenBank/DDBJ databases">
        <title>Complete sequence of Shewanella pealeana ATCC 700345.</title>
        <authorList>
            <consortium name="US DOE Joint Genome Institute"/>
            <person name="Copeland A."/>
            <person name="Lucas S."/>
            <person name="Lapidus A."/>
            <person name="Barry K."/>
            <person name="Glavina del Rio T."/>
            <person name="Dalin E."/>
            <person name="Tice H."/>
            <person name="Pitluck S."/>
            <person name="Chertkov O."/>
            <person name="Brettin T."/>
            <person name="Bruce D."/>
            <person name="Detter J.C."/>
            <person name="Han C."/>
            <person name="Schmutz J."/>
            <person name="Larimer F."/>
            <person name="Land M."/>
            <person name="Hauser L."/>
            <person name="Kyrpides N."/>
            <person name="Kim E."/>
            <person name="Zhao J.-S.Z."/>
            <person name="Manno D."/>
            <person name="Hawari J."/>
            <person name="Richardson P."/>
        </authorList>
    </citation>
    <scope>NUCLEOTIDE SEQUENCE [LARGE SCALE GENOMIC DNA]</scope>
    <source>
        <strain>ATCC 700345 / ANG-SQ1</strain>
    </source>
</reference>
<gene>
    <name evidence="1" type="primary">lolA</name>
    <name type="ordered locus">Spea_2232</name>
</gene>
<organism>
    <name type="scientific">Shewanella pealeana (strain ATCC 700345 / ANG-SQ1)</name>
    <dbReference type="NCBI Taxonomy" id="398579"/>
    <lineage>
        <taxon>Bacteria</taxon>
        <taxon>Pseudomonadati</taxon>
        <taxon>Pseudomonadota</taxon>
        <taxon>Gammaproteobacteria</taxon>
        <taxon>Alteromonadales</taxon>
        <taxon>Shewanellaceae</taxon>
        <taxon>Shewanella</taxon>
    </lineage>
</organism>
<protein>
    <recommendedName>
        <fullName evidence="1">Outer-membrane lipoprotein carrier protein</fullName>
    </recommendedName>
</protein>
<accession>A8H4R5</accession>
<evidence type="ECO:0000255" key="1">
    <source>
        <dbReference type="HAMAP-Rule" id="MF_00240"/>
    </source>
</evidence>